<organism>
    <name type="scientific">Thermoplasma acidophilum (strain ATCC 25905 / DSM 1728 / JCM 9062 / NBRC 15155 / AMRC-C165)</name>
    <dbReference type="NCBI Taxonomy" id="273075"/>
    <lineage>
        <taxon>Archaea</taxon>
        <taxon>Methanobacteriati</taxon>
        <taxon>Thermoplasmatota</taxon>
        <taxon>Thermoplasmata</taxon>
        <taxon>Thermoplasmatales</taxon>
        <taxon>Thermoplasmataceae</taxon>
        <taxon>Thermoplasma</taxon>
    </lineage>
</organism>
<feature type="chain" id="PRO_0000156652" description="Homoserine kinase">
    <location>
        <begin position="1"/>
        <end position="310"/>
    </location>
</feature>
<feature type="binding site" evidence="1">
    <location>
        <begin position="85"/>
        <end position="95"/>
    </location>
    <ligand>
        <name>ATP</name>
        <dbReference type="ChEBI" id="CHEBI:30616"/>
    </ligand>
</feature>
<keyword id="KW-0028">Amino-acid biosynthesis</keyword>
<keyword id="KW-0067">ATP-binding</keyword>
<keyword id="KW-0963">Cytoplasm</keyword>
<keyword id="KW-0418">Kinase</keyword>
<keyword id="KW-0547">Nucleotide-binding</keyword>
<keyword id="KW-1185">Reference proteome</keyword>
<keyword id="KW-0791">Threonine biosynthesis</keyword>
<keyword id="KW-0808">Transferase</keyword>
<name>KHSE_THEAC</name>
<dbReference type="EC" id="2.7.1.39" evidence="1"/>
<dbReference type="EMBL" id="AL445064">
    <property type="protein sequence ID" value="CAC11670.1"/>
    <property type="molecule type" value="Genomic_DNA"/>
</dbReference>
<dbReference type="SMR" id="Q9HKR6"/>
<dbReference type="FunCoup" id="Q9HKR6">
    <property type="interactions" value="127"/>
</dbReference>
<dbReference type="STRING" id="273075.gene:9571748"/>
<dbReference type="PaxDb" id="273075-Ta0530"/>
<dbReference type="EnsemblBacteria" id="CAC11670">
    <property type="protein sequence ID" value="CAC11670"/>
    <property type="gene ID" value="CAC11670"/>
</dbReference>
<dbReference type="KEGG" id="tac:Ta0530"/>
<dbReference type="eggNOG" id="arCOG01027">
    <property type="taxonomic scope" value="Archaea"/>
</dbReference>
<dbReference type="HOGENOM" id="CLU_041243_1_1_2"/>
<dbReference type="InParanoid" id="Q9HKR6"/>
<dbReference type="UniPathway" id="UPA00050">
    <property type="reaction ID" value="UER00064"/>
</dbReference>
<dbReference type="Proteomes" id="UP000001024">
    <property type="component" value="Chromosome"/>
</dbReference>
<dbReference type="GO" id="GO:0005737">
    <property type="term" value="C:cytoplasm"/>
    <property type="evidence" value="ECO:0007669"/>
    <property type="project" value="UniProtKB-SubCell"/>
</dbReference>
<dbReference type="GO" id="GO:0005524">
    <property type="term" value="F:ATP binding"/>
    <property type="evidence" value="ECO:0007669"/>
    <property type="project" value="UniProtKB-UniRule"/>
</dbReference>
<dbReference type="GO" id="GO:0004413">
    <property type="term" value="F:homoserine kinase activity"/>
    <property type="evidence" value="ECO:0007669"/>
    <property type="project" value="UniProtKB-UniRule"/>
</dbReference>
<dbReference type="GO" id="GO:0009088">
    <property type="term" value="P:threonine biosynthetic process"/>
    <property type="evidence" value="ECO:0007669"/>
    <property type="project" value="UniProtKB-UniRule"/>
</dbReference>
<dbReference type="Gene3D" id="3.30.230.10">
    <property type="match status" value="1"/>
</dbReference>
<dbReference type="Gene3D" id="3.30.70.890">
    <property type="entry name" value="GHMP kinase, C-terminal domain"/>
    <property type="match status" value="1"/>
</dbReference>
<dbReference type="HAMAP" id="MF_00384">
    <property type="entry name" value="Homoser_kinase"/>
    <property type="match status" value="1"/>
</dbReference>
<dbReference type="InterPro" id="IPR013750">
    <property type="entry name" value="GHMP_kinase_C_dom"/>
</dbReference>
<dbReference type="InterPro" id="IPR036554">
    <property type="entry name" value="GHMP_kinase_C_sf"/>
</dbReference>
<dbReference type="InterPro" id="IPR006204">
    <property type="entry name" value="GHMP_kinase_N_dom"/>
</dbReference>
<dbReference type="InterPro" id="IPR006203">
    <property type="entry name" value="GHMP_knse_ATP-bd_CS"/>
</dbReference>
<dbReference type="InterPro" id="IPR000870">
    <property type="entry name" value="Homoserine_kinase"/>
</dbReference>
<dbReference type="InterPro" id="IPR020568">
    <property type="entry name" value="Ribosomal_Su5_D2-typ_SF"/>
</dbReference>
<dbReference type="InterPro" id="IPR014721">
    <property type="entry name" value="Ribsml_uS5_D2-typ_fold_subgr"/>
</dbReference>
<dbReference type="NCBIfam" id="NF002288">
    <property type="entry name" value="PRK01212.1-4"/>
    <property type="match status" value="1"/>
</dbReference>
<dbReference type="NCBIfam" id="TIGR00191">
    <property type="entry name" value="thrB"/>
    <property type="match status" value="1"/>
</dbReference>
<dbReference type="PANTHER" id="PTHR20861:SF1">
    <property type="entry name" value="HOMOSERINE KINASE"/>
    <property type="match status" value="1"/>
</dbReference>
<dbReference type="PANTHER" id="PTHR20861">
    <property type="entry name" value="HOMOSERINE/4-DIPHOSPHOCYTIDYL-2-C-METHYL-D-ERYTHRITOL KINASE"/>
    <property type="match status" value="1"/>
</dbReference>
<dbReference type="Pfam" id="PF08544">
    <property type="entry name" value="GHMP_kinases_C"/>
    <property type="match status" value="1"/>
</dbReference>
<dbReference type="Pfam" id="PF00288">
    <property type="entry name" value="GHMP_kinases_N"/>
    <property type="match status" value="1"/>
</dbReference>
<dbReference type="PIRSF" id="PIRSF000676">
    <property type="entry name" value="Homoser_kin"/>
    <property type="match status" value="1"/>
</dbReference>
<dbReference type="PRINTS" id="PR00958">
    <property type="entry name" value="HOMSERKINASE"/>
</dbReference>
<dbReference type="SUPFAM" id="SSF55060">
    <property type="entry name" value="GHMP Kinase, C-terminal domain"/>
    <property type="match status" value="1"/>
</dbReference>
<dbReference type="SUPFAM" id="SSF54211">
    <property type="entry name" value="Ribosomal protein S5 domain 2-like"/>
    <property type="match status" value="1"/>
</dbReference>
<dbReference type="PROSITE" id="PS00627">
    <property type="entry name" value="GHMP_KINASES_ATP"/>
    <property type="match status" value="1"/>
</dbReference>
<comment type="function">
    <text evidence="1">Catalyzes the ATP-dependent phosphorylation of L-homoserine to L-homoserine phosphate.</text>
</comment>
<comment type="catalytic activity">
    <reaction evidence="1">
        <text>L-homoserine + ATP = O-phospho-L-homoserine + ADP + H(+)</text>
        <dbReference type="Rhea" id="RHEA:13985"/>
        <dbReference type="ChEBI" id="CHEBI:15378"/>
        <dbReference type="ChEBI" id="CHEBI:30616"/>
        <dbReference type="ChEBI" id="CHEBI:57476"/>
        <dbReference type="ChEBI" id="CHEBI:57590"/>
        <dbReference type="ChEBI" id="CHEBI:456216"/>
        <dbReference type="EC" id="2.7.1.39"/>
    </reaction>
</comment>
<comment type="pathway">
    <text evidence="1">Amino-acid biosynthesis; L-threonine biosynthesis; L-threonine from L-aspartate: step 4/5.</text>
</comment>
<comment type="subcellular location">
    <subcellularLocation>
        <location evidence="1">Cytoplasm</location>
    </subcellularLocation>
</comment>
<comment type="similarity">
    <text evidence="1">Belongs to the GHMP kinase family. Homoserine kinase subfamily.</text>
</comment>
<evidence type="ECO:0000255" key="1">
    <source>
        <dbReference type="HAMAP-Rule" id="MF_00384"/>
    </source>
</evidence>
<sequence>MPQVKVTASAPCSSANLGSGFDTLAIALDAFHDRVTISDHDGFKLTGEGIPLDPERNTAGLAAIALLDELGLERDIEIRIEKGVPKGLGLGSSGASAAAAVKALDAYFGLGLTQEEMIGYAMIGEIASSGSPHPDNVSASIIGGLVLVTHDDDLRASRINISGDYRFLVAIPDLFTENKTRAARQMLPRSIPLDSYSKALGRTASLIAGLMSGNRNLIRVGMNDDIVEPSRISLFPYYYDMKRMALANEAVAAAVSGAGPSILMVCDEMSDMDSIRAGISEIFSRYNITGRVIEARMSGGAFVEGSPVSD</sequence>
<gene>
    <name evidence="1" type="primary">thrB</name>
    <name type="ordered locus">Ta0530</name>
</gene>
<proteinExistence type="inferred from homology"/>
<protein>
    <recommendedName>
        <fullName evidence="1">Homoserine kinase</fullName>
        <shortName evidence="1">HK</shortName>
        <shortName evidence="1">HSK</shortName>
        <ecNumber evidence="1">2.7.1.39</ecNumber>
    </recommendedName>
</protein>
<reference key="1">
    <citation type="journal article" date="2000" name="Nature">
        <title>The genome sequence of the thermoacidophilic scavenger Thermoplasma acidophilum.</title>
        <authorList>
            <person name="Ruepp A."/>
            <person name="Graml W."/>
            <person name="Santos-Martinez M.-L."/>
            <person name="Koretke K.K."/>
            <person name="Volker C."/>
            <person name="Mewes H.-W."/>
            <person name="Frishman D."/>
            <person name="Stocker S."/>
            <person name="Lupas A.N."/>
            <person name="Baumeister W."/>
        </authorList>
    </citation>
    <scope>NUCLEOTIDE SEQUENCE [LARGE SCALE GENOMIC DNA]</scope>
    <source>
        <strain>ATCC 25905 / DSM 1728 / JCM 9062 / NBRC 15155 / AMRC-C165</strain>
    </source>
</reference>
<accession>Q9HKR6</accession>